<feature type="chain" id="PRO_1000064194" description="Glycerol-3-phosphate acyltransferase">
    <location>
        <begin position="1"/>
        <end position="218"/>
    </location>
</feature>
<feature type="transmembrane region" description="Helical" evidence="1">
    <location>
        <begin position="3"/>
        <end position="23"/>
    </location>
</feature>
<feature type="transmembrane region" description="Helical" evidence="1">
    <location>
        <begin position="53"/>
        <end position="73"/>
    </location>
</feature>
<feature type="transmembrane region" description="Helical" evidence="1">
    <location>
        <begin position="82"/>
        <end position="102"/>
    </location>
</feature>
<feature type="transmembrane region" description="Helical" evidence="1">
    <location>
        <begin position="112"/>
        <end position="132"/>
    </location>
</feature>
<feature type="transmembrane region" description="Helical" evidence="1">
    <location>
        <begin position="142"/>
        <end position="162"/>
    </location>
</feature>
<feature type="transmembrane region" description="Helical" evidence="1">
    <location>
        <begin position="166"/>
        <end position="186"/>
    </location>
</feature>
<proteinExistence type="inferred from homology"/>
<evidence type="ECO:0000255" key="1">
    <source>
        <dbReference type="HAMAP-Rule" id="MF_01043"/>
    </source>
</evidence>
<gene>
    <name evidence="1" type="primary">plsY</name>
    <name type="ordered locus">LBL_1999</name>
</gene>
<name>PLSY_LEPBL</name>
<reference key="1">
    <citation type="journal article" date="2006" name="Proc. Natl. Acad. Sci. U.S.A.">
        <title>Genome reduction in Leptospira borgpetersenii reflects limited transmission potential.</title>
        <authorList>
            <person name="Bulach D.M."/>
            <person name="Zuerner R.L."/>
            <person name="Wilson P."/>
            <person name="Seemann T."/>
            <person name="McGrath A."/>
            <person name="Cullen P.A."/>
            <person name="Davis J."/>
            <person name="Johnson M."/>
            <person name="Kuczek E."/>
            <person name="Alt D.P."/>
            <person name="Peterson-Burch B."/>
            <person name="Coppel R.L."/>
            <person name="Rood J.I."/>
            <person name="Davies J.K."/>
            <person name="Adler B."/>
        </authorList>
    </citation>
    <scope>NUCLEOTIDE SEQUENCE [LARGE SCALE GENOMIC DNA]</scope>
    <source>
        <strain>L550</strain>
    </source>
</reference>
<accession>Q04ZS2</accession>
<dbReference type="EC" id="2.3.1.275" evidence="1"/>
<dbReference type="EMBL" id="CP000348">
    <property type="protein sequence ID" value="ABJ79423.1"/>
    <property type="molecule type" value="Genomic_DNA"/>
</dbReference>
<dbReference type="RefSeq" id="WP_011670497.1">
    <property type="nucleotide sequence ID" value="NC_008508.1"/>
</dbReference>
<dbReference type="SMR" id="Q04ZS2"/>
<dbReference type="KEGG" id="lbl:LBL_1999"/>
<dbReference type="HOGENOM" id="CLU_081254_7_1_12"/>
<dbReference type="UniPathway" id="UPA00085"/>
<dbReference type="GO" id="GO:0005886">
    <property type="term" value="C:plasma membrane"/>
    <property type="evidence" value="ECO:0007669"/>
    <property type="project" value="UniProtKB-SubCell"/>
</dbReference>
<dbReference type="GO" id="GO:0043772">
    <property type="term" value="F:acyl-phosphate glycerol-3-phosphate acyltransferase activity"/>
    <property type="evidence" value="ECO:0007669"/>
    <property type="project" value="UniProtKB-UniRule"/>
</dbReference>
<dbReference type="GO" id="GO:0008654">
    <property type="term" value="P:phospholipid biosynthetic process"/>
    <property type="evidence" value="ECO:0007669"/>
    <property type="project" value="UniProtKB-UniRule"/>
</dbReference>
<dbReference type="HAMAP" id="MF_01043">
    <property type="entry name" value="PlsY"/>
    <property type="match status" value="1"/>
</dbReference>
<dbReference type="InterPro" id="IPR003811">
    <property type="entry name" value="G3P_acylTferase_PlsY"/>
</dbReference>
<dbReference type="NCBIfam" id="TIGR00023">
    <property type="entry name" value="glycerol-3-phosphate 1-O-acyltransferase PlsY"/>
    <property type="match status" value="1"/>
</dbReference>
<dbReference type="PANTHER" id="PTHR30309:SF0">
    <property type="entry name" value="GLYCEROL-3-PHOSPHATE ACYLTRANSFERASE-RELATED"/>
    <property type="match status" value="1"/>
</dbReference>
<dbReference type="PANTHER" id="PTHR30309">
    <property type="entry name" value="INNER MEMBRANE PROTEIN YGIH"/>
    <property type="match status" value="1"/>
</dbReference>
<dbReference type="Pfam" id="PF02660">
    <property type="entry name" value="G3P_acyltransf"/>
    <property type="match status" value="1"/>
</dbReference>
<dbReference type="SMART" id="SM01207">
    <property type="entry name" value="G3P_acyltransf"/>
    <property type="match status" value="1"/>
</dbReference>
<keyword id="KW-0997">Cell inner membrane</keyword>
<keyword id="KW-1003">Cell membrane</keyword>
<keyword id="KW-0444">Lipid biosynthesis</keyword>
<keyword id="KW-0443">Lipid metabolism</keyword>
<keyword id="KW-0472">Membrane</keyword>
<keyword id="KW-0594">Phospholipid biosynthesis</keyword>
<keyword id="KW-1208">Phospholipid metabolism</keyword>
<keyword id="KW-0808">Transferase</keyword>
<keyword id="KW-0812">Transmembrane</keyword>
<keyword id="KW-1133">Transmembrane helix</keyword>
<protein>
    <recommendedName>
        <fullName evidence="1">Glycerol-3-phosphate acyltransferase</fullName>
    </recommendedName>
    <alternativeName>
        <fullName evidence="1">Acyl-PO4 G3P acyltransferase</fullName>
    </alternativeName>
    <alternativeName>
        <fullName evidence="1">Acyl-phosphate--glycerol-3-phosphate acyltransferase</fullName>
    </alternativeName>
    <alternativeName>
        <fullName evidence="1">G3P acyltransferase</fullName>
        <shortName evidence="1">GPAT</shortName>
        <ecNumber evidence="1">2.3.1.275</ecNumber>
    </alternativeName>
    <alternativeName>
        <fullName evidence="1">Lysophosphatidic acid synthase</fullName>
        <shortName evidence="1">LPA synthase</shortName>
    </alternativeName>
</protein>
<comment type="function">
    <text evidence="1">Catalyzes the transfer of an acyl group from acyl-phosphate (acyl-PO(4)) to glycerol-3-phosphate (G3P) to form lysophosphatidic acid (LPA). This enzyme utilizes acyl-phosphate as fatty acyl donor, but not acyl-CoA or acyl-ACP.</text>
</comment>
<comment type="catalytic activity">
    <reaction evidence="1">
        <text>an acyl phosphate + sn-glycerol 3-phosphate = a 1-acyl-sn-glycero-3-phosphate + phosphate</text>
        <dbReference type="Rhea" id="RHEA:34075"/>
        <dbReference type="ChEBI" id="CHEBI:43474"/>
        <dbReference type="ChEBI" id="CHEBI:57597"/>
        <dbReference type="ChEBI" id="CHEBI:57970"/>
        <dbReference type="ChEBI" id="CHEBI:59918"/>
        <dbReference type="EC" id="2.3.1.275"/>
    </reaction>
</comment>
<comment type="pathway">
    <text evidence="1">Lipid metabolism; phospholipid metabolism.</text>
</comment>
<comment type="subunit">
    <text evidence="1">Probably interacts with PlsX.</text>
</comment>
<comment type="subcellular location">
    <subcellularLocation>
        <location evidence="1">Cell inner membrane</location>
        <topology evidence="1">Multi-pass membrane protein</topology>
    </subcellularLocation>
</comment>
<comment type="similarity">
    <text evidence="1">Belongs to the PlsY family.</text>
</comment>
<organism>
    <name type="scientific">Leptospira borgpetersenii serovar Hardjo-bovis (strain L550)</name>
    <dbReference type="NCBI Taxonomy" id="355276"/>
    <lineage>
        <taxon>Bacteria</taxon>
        <taxon>Pseudomonadati</taxon>
        <taxon>Spirochaetota</taxon>
        <taxon>Spirochaetia</taxon>
        <taxon>Leptospirales</taxon>
        <taxon>Leptospiraceae</taxon>
        <taxon>Leptospira</taxon>
    </lineage>
</organism>
<sequence>MNFAIFAFLSFISGSIPFGYWIALRFGKMDIRKFGSKNIGATNVGRSIGWKFGFPVLVLDVAKGIFPVYLSGIYIPEGGVPFQLACGVLAVLGHMFSPFLGFKGGKGVATTLGVFLVLTPIACFGAIFVFLVTIKYFKFVSIGSIFASLTLPLVYAFSSILLLHEEVSYWILGTMVFISIGIILTHRENIFRILNRSELFAVKNEDEERNGDSERNRR</sequence>